<organism>
    <name type="scientific">Mycobacterium leprae (strain TN)</name>
    <dbReference type="NCBI Taxonomy" id="272631"/>
    <lineage>
        <taxon>Bacteria</taxon>
        <taxon>Bacillati</taxon>
        <taxon>Actinomycetota</taxon>
        <taxon>Actinomycetes</taxon>
        <taxon>Mycobacteriales</taxon>
        <taxon>Mycobacteriaceae</taxon>
        <taxon>Mycobacterium</taxon>
    </lineage>
</organism>
<proteinExistence type="inferred from homology"/>
<protein>
    <recommendedName>
        <fullName>Phosphoribosyl isomerase A</fullName>
    </recommendedName>
    <alternativeName>
        <fullName>1-(5-phosphoribosyl)-5-[(5-phosphoribosylamino)methylideneamino] imidazole-4-carboxamide isomerase</fullName>
        <ecNumber>5.3.1.16</ecNumber>
    </alternativeName>
    <alternativeName>
        <fullName>N-(5'-phosphoribosyl)anthranilate isomerase</fullName>
        <shortName>PRAI</shortName>
        <ecNumber>5.3.1.24</ecNumber>
    </alternativeName>
    <alternativeName>
        <fullName>Phosphoribosylformimino-5-aminoimidazole carboxamide ribotide isomerase</fullName>
    </alternativeName>
</protein>
<evidence type="ECO:0000250" key="1"/>
<evidence type="ECO:0000305" key="2"/>
<feature type="chain" id="PRO_0000142083" description="Phosphoribosyl isomerase A">
    <location>
        <begin position="1"/>
        <end position="244"/>
    </location>
</feature>
<feature type="active site" description="Proton acceptor" evidence="1">
    <location>
        <position position="10"/>
    </location>
</feature>
<feature type="active site" description="Proton donor" evidence="1">
    <location>
        <position position="129"/>
    </location>
</feature>
<name>HIS4_MYCLE</name>
<dbReference type="EC" id="5.3.1.16"/>
<dbReference type="EC" id="5.3.1.24"/>
<dbReference type="EMBL" id="AL049913">
    <property type="protein sequence ID" value="CAB43170.1"/>
    <property type="status" value="ALT_INIT"/>
    <property type="molecule type" value="Genomic_DNA"/>
</dbReference>
<dbReference type="EMBL" id="AL583921">
    <property type="protein sequence ID" value="CAC31642.1"/>
    <property type="status" value="ALT_INIT"/>
    <property type="molecule type" value="Genomic_DNA"/>
</dbReference>
<dbReference type="PIR" id="G87066">
    <property type="entry name" value="G87066"/>
</dbReference>
<dbReference type="PIR" id="T45250">
    <property type="entry name" value="T45250"/>
</dbReference>
<dbReference type="RefSeq" id="WP_010908231.1">
    <property type="nucleotide sequence ID" value="NC_002677.1"/>
</dbReference>
<dbReference type="SMR" id="Q9CC56"/>
<dbReference type="STRING" id="272631.gene:17575093"/>
<dbReference type="KEGG" id="mle:ML1261"/>
<dbReference type="Leproma" id="ML1261"/>
<dbReference type="eggNOG" id="COG0106">
    <property type="taxonomic scope" value="Bacteria"/>
</dbReference>
<dbReference type="HOGENOM" id="CLU_048577_1_1_11"/>
<dbReference type="UniPathway" id="UPA00031">
    <property type="reaction ID" value="UER00009"/>
</dbReference>
<dbReference type="UniPathway" id="UPA00035">
    <property type="reaction ID" value="UER00042"/>
</dbReference>
<dbReference type="Proteomes" id="UP000000806">
    <property type="component" value="Chromosome"/>
</dbReference>
<dbReference type="GO" id="GO:0005737">
    <property type="term" value="C:cytoplasm"/>
    <property type="evidence" value="ECO:0007669"/>
    <property type="project" value="UniProtKB-SubCell"/>
</dbReference>
<dbReference type="GO" id="GO:0003949">
    <property type="term" value="F:1-(5-phosphoribosyl)-5-[(5-phosphoribosylamino)methylideneamino]imidazole-4-carboxamide isomerase activity"/>
    <property type="evidence" value="ECO:0007669"/>
    <property type="project" value="UniProtKB-UniRule"/>
</dbReference>
<dbReference type="GO" id="GO:0004640">
    <property type="term" value="F:phosphoribosylanthranilate isomerase activity"/>
    <property type="evidence" value="ECO:0007669"/>
    <property type="project" value="UniProtKB-UniRule"/>
</dbReference>
<dbReference type="GO" id="GO:0000105">
    <property type="term" value="P:L-histidine biosynthetic process"/>
    <property type="evidence" value="ECO:0007669"/>
    <property type="project" value="UniProtKB-UniRule"/>
</dbReference>
<dbReference type="GO" id="GO:0000162">
    <property type="term" value="P:L-tryptophan biosynthetic process"/>
    <property type="evidence" value="ECO:0007669"/>
    <property type="project" value="UniProtKB-UniRule"/>
</dbReference>
<dbReference type="CDD" id="cd04732">
    <property type="entry name" value="HisA"/>
    <property type="match status" value="1"/>
</dbReference>
<dbReference type="FunFam" id="3.20.20.70:FF:000009">
    <property type="entry name" value="1-(5-phosphoribosyl)-5-[(5-phosphoribosylamino)methylideneamino] imidazole-4-carboxamide isomerase"/>
    <property type="match status" value="1"/>
</dbReference>
<dbReference type="Gene3D" id="3.20.20.70">
    <property type="entry name" value="Aldolase class I"/>
    <property type="match status" value="1"/>
</dbReference>
<dbReference type="HAMAP" id="MF_01014">
    <property type="entry name" value="HisA"/>
    <property type="match status" value="1"/>
</dbReference>
<dbReference type="InterPro" id="IPR013785">
    <property type="entry name" value="Aldolase_TIM"/>
</dbReference>
<dbReference type="InterPro" id="IPR006062">
    <property type="entry name" value="His_biosynth"/>
</dbReference>
<dbReference type="InterPro" id="IPR010188">
    <property type="entry name" value="HisA/PriA_Actinobacteria"/>
</dbReference>
<dbReference type="InterPro" id="IPR044524">
    <property type="entry name" value="Isoase_HisA-like"/>
</dbReference>
<dbReference type="InterPro" id="IPR023016">
    <property type="entry name" value="Isoase_HisA-like_bact"/>
</dbReference>
<dbReference type="InterPro" id="IPR011060">
    <property type="entry name" value="RibuloseP-bd_barrel"/>
</dbReference>
<dbReference type="NCBIfam" id="TIGR01919">
    <property type="entry name" value="hisA-trpF"/>
    <property type="match status" value="1"/>
</dbReference>
<dbReference type="PANTHER" id="PTHR43090">
    <property type="entry name" value="1-(5-PHOSPHORIBOSYL)-5-[(5-PHOSPHORIBOSYLAMINO)METHYLIDENEAMINO] IMIDAZOLE-4-CARBOXAMIDE ISOMERASE"/>
    <property type="match status" value="1"/>
</dbReference>
<dbReference type="PANTHER" id="PTHR43090:SF2">
    <property type="entry name" value="1-(5-PHOSPHORIBOSYL)-5-[(5-PHOSPHORIBOSYLAMINO)METHYLIDENEAMINO] IMIDAZOLE-4-CARBOXAMIDE ISOMERASE"/>
    <property type="match status" value="1"/>
</dbReference>
<dbReference type="Pfam" id="PF00977">
    <property type="entry name" value="His_biosynth"/>
    <property type="match status" value="1"/>
</dbReference>
<dbReference type="SUPFAM" id="SSF51366">
    <property type="entry name" value="Ribulose-phoshate binding barrel"/>
    <property type="match status" value="1"/>
</dbReference>
<keyword id="KW-0028">Amino-acid biosynthesis</keyword>
<keyword id="KW-0057">Aromatic amino acid biosynthesis</keyword>
<keyword id="KW-0963">Cytoplasm</keyword>
<keyword id="KW-0368">Histidine biosynthesis</keyword>
<keyword id="KW-0413">Isomerase</keyword>
<keyword id="KW-1185">Reference proteome</keyword>
<keyword id="KW-0822">Tryptophan biosynthesis</keyword>
<comment type="function">
    <text evidence="1">Involved in both the histidine and tryptophan biosynthetic pathways.</text>
</comment>
<comment type="catalytic activity">
    <reaction>
        <text>1-(5-phospho-beta-D-ribosyl)-5-[(5-phospho-beta-D-ribosylamino)methylideneamino]imidazole-4-carboxamide = 5-[(5-phospho-1-deoxy-D-ribulos-1-ylimino)methylamino]-1-(5-phospho-beta-D-ribosyl)imidazole-4-carboxamide</text>
        <dbReference type="Rhea" id="RHEA:15469"/>
        <dbReference type="ChEBI" id="CHEBI:58435"/>
        <dbReference type="ChEBI" id="CHEBI:58525"/>
        <dbReference type="EC" id="5.3.1.16"/>
    </reaction>
</comment>
<comment type="catalytic activity">
    <reaction>
        <text>N-(5-phospho-beta-D-ribosyl)anthranilate = 1-(2-carboxyphenylamino)-1-deoxy-D-ribulose 5-phosphate</text>
        <dbReference type="Rhea" id="RHEA:21540"/>
        <dbReference type="ChEBI" id="CHEBI:18277"/>
        <dbReference type="ChEBI" id="CHEBI:58613"/>
        <dbReference type="EC" id="5.3.1.24"/>
    </reaction>
</comment>
<comment type="pathway">
    <text>Amino-acid biosynthesis; L-histidine biosynthesis; L-histidine from 5-phospho-alpha-D-ribose 1-diphosphate: step 4/9.</text>
</comment>
<comment type="pathway">
    <text>Amino-acid biosynthesis; L-tryptophan biosynthesis; L-tryptophan from chorismate: step 3/5.</text>
</comment>
<comment type="subcellular location">
    <subcellularLocation>
        <location evidence="1">Cytoplasm</location>
    </subcellularLocation>
</comment>
<comment type="similarity">
    <text evidence="2">Belongs to the HisA/HisF family.</text>
</comment>
<comment type="sequence caution" evidence="2">
    <conflict type="erroneous initiation">
        <sequence resource="EMBL-CDS" id="CAB43170"/>
    </conflict>
</comment>
<comment type="sequence caution" evidence="2">
    <conflict type="erroneous initiation">
        <sequence resource="EMBL-CDS" id="CAC31642"/>
    </conflict>
</comment>
<accession>Q9CC56</accession>
<accession>Q9X7C1</accession>
<gene>
    <name type="primary">priA</name>
    <name type="synonym">hisA</name>
    <name type="ordered locus">ML1261</name>
    <name type="ORF">MLCB1610.24</name>
</gene>
<reference key="1">
    <citation type="journal article" date="2001" name="Nature">
        <title>Massive gene decay in the leprosy bacillus.</title>
        <authorList>
            <person name="Cole S.T."/>
            <person name="Eiglmeier K."/>
            <person name="Parkhill J."/>
            <person name="James K.D."/>
            <person name="Thomson N.R."/>
            <person name="Wheeler P.R."/>
            <person name="Honore N."/>
            <person name="Garnier T."/>
            <person name="Churcher C.M."/>
            <person name="Harris D.E."/>
            <person name="Mungall K.L."/>
            <person name="Basham D."/>
            <person name="Brown D."/>
            <person name="Chillingworth T."/>
            <person name="Connor R."/>
            <person name="Davies R.M."/>
            <person name="Devlin K."/>
            <person name="Duthoy S."/>
            <person name="Feltwell T."/>
            <person name="Fraser A."/>
            <person name="Hamlin N."/>
            <person name="Holroyd S."/>
            <person name="Hornsby T."/>
            <person name="Jagels K."/>
            <person name="Lacroix C."/>
            <person name="Maclean J."/>
            <person name="Moule S."/>
            <person name="Murphy L.D."/>
            <person name="Oliver K."/>
            <person name="Quail M.A."/>
            <person name="Rajandream M.A."/>
            <person name="Rutherford K.M."/>
            <person name="Rutter S."/>
            <person name="Seeger K."/>
            <person name="Simon S."/>
            <person name="Simmonds M."/>
            <person name="Skelton J."/>
            <person name="Squares R."/>
            <person name="Squares S."/>
            <person name="Stevens K."/>
            <person name="Taylor K."/>
            <person name="Whitehead S."/>
            <person name="Woodward J.R."/>
            <person name="Barrell B.G."/>
        </authorList>
    </citation>
    <scope>NUCLEOTIDE SEQUENCE [LARGE SCALE GENOMIC DNA]</scope>
    <source>
        <strain>TN</strain>
    </source>
</reference>
<sequence length="244" mass="26003">MSLILLPAVDVVEGRAVRLVQGKAGSENDYGSALDAALCWQRDGADWIHLVDLDAAFGRGSNRELLSEMVGKLDVQVELSGGIRDDDSLNAALATGCARVNLGTAACENPHWCAQVIAEHGDKIAVGLDVQIVDGQHRLRGRGWETDGGDLWDVLENLDRQGCSRFIVTDVTKDGTLDGPNLDLLASVSDRTNVPVIASGGVSSLDDLRAIAKFTERGIEGAIVGKALYAERFTLPQALAVVRM</sequence>